<comment type="function">
    <text evidence="3">Catalyzes the hydrolysis of aryl-phospho-beta-D-glucosides such as 4-methylumbelliferyl-phospho-beta-D-glucopyranoside (MUG-P), phosphoarbutin and phosphosalicin. Plays a major role in the utilization of arbutin or salicin as the sole carbon source. BglA and BglH are the major proteins contributing to hydrolysis of MUG-P by extracts of late-exponential-phase or stationary-phase B.subtilis cells.</text>
</comment>
<comment type="catalytic activity">
    <reaction>
        <text>6-phospho-beta-D-glucosyl-(1-&gt;4)-D-glucose + H2O = D-glucose 6-phosphate + D-glucose</text>
        <dbReference type="Rhea" id="RHEA:10772"/>
        <dbReference type="ChEBI" id="CHEBI:4167"/>
        <dbReference type="ChEBI" id="CHEBI:15377"/>
        <dbReference type="ChEBI" id="CHEBI:58312"/>
        <dbReference type="ChEBI" id="CHEBI:61548"/>
        <dbReference type="EC" id="3.2.1.86"/>
    </reaction>
</comment>
<comment type="developmental stage">
    <text evidence="3">Expressed during stationary-phase and exponential-phase of growth.</text>
</comment>
<comment type="induction">
    <text evidence="3 4">Up-regulated by the aryl-beta-D-glucoside salicin.</text>
</comment>
<comment type="similarity">
    <text evidence="5">Belongs to the glycosyl hydrolase 1 family.</text>
</comment>
<proteinExistence type="evidence at protein level"/>
<reference key="1">
    <citation type="journal article" date="1994" name="Gene">
        <title>A Bacillus subtilis bglA gene encoding phospho-beta-glucosidase is inducible and closely linked to a NADH dehydrogenase-encoding gene.</title>
        <authorList>
            <person name="Zhang J."/>
            <person name="Aronson A.I."/>
        </authorList>
    </citation>
    <scope>NUCLEOTIDE SEQUENCE [GENOMIC DNA]</scope>
    <scope>INDUCTION</scope>
    <source>
        <strain>168 / JH642</strain>
    </source>
</reference>
<reference key="2">
    <citation type="journal article" date="1997" name="DNA Res.">
        <title>Sequence analysis of the 36-kb region between gntZ and trnY genes of Bacillus subtilis genome.</title>
        <authorList>
            <person name="Kasahara Y."/>
            <person name="Nakai S."/>
            <person name="Ogasawara N."/>
        </authorList>
    </citation>
    <scope>NUCLEOTIDE SEQUENCE [GENOMIC DNA]</scope>
    <source>
        <strain>168</strain>
    </source>
</reference>
<reference key="3">
    <citation type="journal article" date="1997" name="Nature">
        <title>The complete genome sequence of the Gram-positive bacterium Bacillus subtilis.</title>
        <authorList>
            <person name="Kunst F."/>
            <person name="Ogasawara N."/>
            <person name="Moszer I."/>
            <person name="Albertini A.M."/>
            <person name="Alloni G."/>
            <person name="Azevedo V."/>
            <person name="Bertero M.G."/>
            <person name="Bessieres P."/>
            <person name="Bolotin A."/>
            <person name="Borchert S."/>
            <person name="Borriss R."/>
            <person name="Boursier L."/>
            <person name="Brans A."/>
            <person name="Braun M."/>
            <person name="Brignell S.C."/>
            <person name="Bron S."/>
            <person name="Brouillet S."/>
            <person name="Bruschi C.V."/>
            <person name="Caldwell B."/>
            <person name="Capuano V."/>
            <person name="Carter N.M."/>
            <person name="Choi S.-K."/>
            <person name="Codani J.-J."/>
            <person name="Connerton I.F."/>
            <person name="Cummings N.J."/>
            <person name="Daniel R.A."/>
            <person name="Denizot F."/>
            <person name="Devine K.M."/>
            <person name="Duesterhoeft A."/>
            <person name="Ehrlich S.D."/>
            <person name="Emmerson P.T."/>
            <person name="Entian K.-D."/>
            <person name="Errington J."/>
            <person name="Fabret C."/>
            <person name="Ferrari E."/>
            <person name="Foulger D."/>
            <person name="Fritz C."/>
            <person name="Fujita M."/>
            <person name="Fujita Y."/>
            <person name="Fuma S."/>
            <person name="Galizzi A."/>
            <person name="Galleron N."/>
            <person name="Ghim S.-Y."/>
            <person name="Glaser P."/>
            <person name="Goffeau A."/>
            <person name="Golightly E.J."/>
            <person name="Grandi G."/>
            <person name="Guiseppi G."/>
            <person name="Guy B.J."/>
            <person name="Haga K."/>
            <person name="Haiech J."/>
            <person name="Harwood C.R."/>
            <person name="Henaut A."/>
            <person name="Hilbert H."/>
            <person name="Holsappel S."/>
            <person name="Hosono S."/>
            <person name="Hullo M.-F."/>
            <person name="Itaya M."/>
            <person name="Jones L.-M."/>
            <person name="Joris B."/>
            <person name="Karamata D."/>
            <person name="Kasahara Y."/>
            <person name="Klaerr-Blanchard M."/>
            <person name="Klein C."/>
            <person name="Kobayashi Y."/>
            <person name="Koetter P."/>
            <person name="Koningstein G."/>
            <person name="Krogh S."/>
            <person name="Kumano M."/>
            <person name="Kurita K."/>
            <person name="Lapidus A."/>
            <person name="Lardinois S."/>
            <person name="Lauber J."/>
            <person name="Lazarevic V."/>
            <person name="Lee S.-M."/>
            <person name="Levine A."/>
            <person name="Liu H."/>
            <person name="Masuda S."/>
            <person name="Mauel C."/>
            <person name="Medigue C."/>
            <person name="Medina N."/>
            <person name="Mellado R.P."/>
            <person name="Mizuno M."/>
            <person name="Moestl D."/>
            <person name="Nakai S."/>
            <person name="Noback M."/>
            <person name="Noone D."/>
            <person name="O'Reilly M."/>
            <person name="Ogawa K."/>
            <person name="Ogiwara A."/>
            <person name="Oudega B."/>
            <person name="Park S.-H."/>
            <person name="Parro V."/>
            <person name="Pohl T.M."/>
            <person name="Portetelle D."/>
            <person name="Porwollik S."/>
            <person name="Prescott A.M."/>
            <person name="Presecan E."/>
            <person name="Pujic P."/>
            <person name="Purnelle B."/>
            <person name="Rapoport G."/>
            <person name="Rey M."/>
            <person name="Reynolds S."/>
            <person name="Rieger M."/>
            <person name="Rivolta C."/>
            <person name="Rocha E."/>
            <person name="Roche B."/>
            <person name="Rose M."/>
            <person name="Sadaie Y."/>
            <person name="Sato T."/>
            <person name="Scanlan E."/>
            <person name="Schleich S."/>
            <person name="Schroeter R."/>
            <person name="Scoffone F."/>
            <person name="Sekiguchi J."/>
            <person name="Sekowska A."/>
            <person name="Seror S.J."/>
            <person name="Serror P."/>
            <person name="Shin B.-S."/>
            <person name="Soldo B."/>
            <person name="Sorokin A."/>
            <person name="Tacconi E."/>
            <person name="Takagi T."/>
            <person name="Takahashi H."/>
            <person name="Takemaru K."/>
            <person name="Takeuchi M."/>
            <person name="Tamakoshi A."/>
            <person name="Tanaka T."/>
            <person name="Terpstra P."/>
            <person name="Tognoni A."/>
            <person name="Tosato V."/>
            <person name="Uchiyama S."/>
            <person name="Vandenbol M."/>
            <person name="Vannier F."/>
            <person name="Vassarotti A."/>
            <person name="Viari A."/>
            <person name="Wambutt R."/>
            <person name="Wedler E."/>
            <person name="Wedler H."/>
            <person name="Weitzenegger T."/>
            <person name="Winters P."/>
            <person name="Wipat A."/>
            <person name="Yamamoto H."/>
            <person name="Yamane K."/>
            <person name="Yasumoto K."/>
            <person name="Yata K."/>
            <person name="Yoshida K."/>
            <person name="Yoshikawa H.-F."/>
            <person name="Zumstein E."/>
            <person name="Yoshikawa H."/>
            <person name="Danchin A."/>
        </authorList>
    </citation>
    <scope>NUCLEOTIDE SEQUENCE [LARGE SCALE GENOMIC DNA]</scope>
    <source>
        <strain>168</strain>
    </source>
</reference>
<reference key="4">
    <citation type="journal article" date="2004" name="Arch. Microbiol.">
        <title>Identification of aryl-phospho-beta-D-glucosidases in Bacillus subtilis.</title>
        <authorList>
            <person name="Setlow B."/>
            <person name="Cabrera-Hernandez A."/>
            <person name="Cabrera-Martinez R.M."/>
            <person name="Setlow P."/>
        </authorList>
    </citation>
    <scope>FUNCTION AS AN ARYL-PHOSPHO-BETA-D-GLUCOSIDASE</scope>
    <scope>DEVELOPMENTAL STAGE</scope>
    <scope>INDUCTION</scope>
    <source>
        <strain>168 / PS832</strain>
    </source>
</reference>
<keyword id="KW-0119">Carbohydrate metabolism</keyword>
<keyword id="KW-0326">Glycosidase</keyword>
<keyword id="KW-0378">Hydrolase</keyword>
<keyword id="KW-1185">Reference proteome</keyword>
<feature type="chain" id="PRO_0000063896" description="Aryl-phospho-beta-D-glucosidase BglA">
    <location>
        <begin position="1"/>
        <end position="479"/>
    </location>
</feature>
<feature type="active site" description="Proton donor" evidence="1">
    <location>
        <position position="176"/>
    </location>
</feature>
<feature type="active site" description="Nucleophile" evidence="2">
    <location>
        <position position="377"/>
    </location>
</feature>
<gene>
    <name type="primary">bglA</name>
    <name type="ordered locus">BSU40110</name>
</gene>
<organism>
    <name type="scientific">Bacillus subtilis (strain 168)</name>
    <dbReference type="NCBI Taxonomy" id="224308"/>
    <lineage>
        <taxon>Bacteria</taxon>
        <taxon>Bacillati</taxon>
        <taxon>Bacillota</taxon>
        <taxon>Bacilli</taxon>
        <taxon>Bacillales</taxon>
        <taxon>Bacillaceae</taxon>
        <taxon>Bacillus</taxon>
    </lineage>
</organism>
<name>BGLA_BACSU</name>
<accession>P42973</accession>
<dbReference type="EC" id="3.2.1.86"/>
<dbReference type="EMBL" id="L19710">
    <property type="protein sequence ID" value="AAA22660.1"/>
    <property type="molecule type" value="Genomic_DNA"/>
</dbReference>
<dbReference type="EMBL" id="D78193">
    <property type="protein sequence ID" value="BAA11270.1"/>
    <property type="molecule type" value="Genomic_DNA"/>
</dbReference>
<dbReference type="EMBL" id="AL009126">
    <property type="protein sequence ID" value="CAB16048.1"/>
    <property type="molecule type" value="Genomic_DNA"/>
</dbReference>
<dbReference type="PIR" id="I39953">
    <property type="entry name" value="I39953"/>
</dbReference>
<dbReference type="RefSeq" id="NP_391891.1">
    <property type="nucleotide sequence ID" value="NC_000964.3"/>
</dbReference>
<dbReference type="RefSeq" id="WP_003226994.1">
    <property type="nucleotide sequence ID" value="NZ_OZ025638.1"/>
</dbReference>
<dbReference type="SMR" id="P42973"/>
<dbReference type="FunCoup" id="P42973">
    <property type="interactions" value="198"/>
</dbReference>
<dbReference type="STRING" id="224308.BSU40110"/>
<dbReference type="CAZy" id="GH1">
    <property type="family name" value="Glycoside Hydrolase Family 1"/>
</dbReference>
<dbReference type="jPOST" id="P42973"/>
<dbReference type="PaxDb" id="224308-BSU40110"/>
<dbReference type="EnsemblBacteria" id="CAB16048">
    <property type="protein sequence ID" value="CAB16048"/>
    <property type="gene ID" value="BSU_40110"/>
</dbReference>
<dbReference type="GeneID" id="937718"/>
<dbReference type="KEGG" id="bsu:BSU40110"/>
<dbReference type="PATRIC" id="fig|224308.179.peg.4338"/>
<dbReference type="eggNOG" id="COG2723">
    <property type="taxonomic scope" value="Bacteria"/>
</dbReference>
<dbReference type="InParanoid" id="P42973"/>
<dbReference type="OrthoDB" id="9765195at2"/>
<dbReference type="PhylomeDB" id="P42973"/>
<dbReference type="BioCyc" id="BSUB:BSU40110-MONOMER"/>
<dbReference type="Proteomes" id="UP000001570">
    <property type="component" value="Chromosome"/>
</dbReference>
<dbReference type="GO" id="GO:0005829">
    <property type="term" value="C:cytosol"/>
    <property type="evidence" value="ECO:0000318"/>
    <property type="project" value="GO_Central"/>
</dbReference>
<dbReference type="GO" id="GO:0008706">
    <property type="term" value="F:6-phospho-beta-glucosidase activity"/>
    <property type="evidence" value="ECO:0007669"/>
    <property type="project" value="UniProtKB-EC"/>
</dbReference>
<dbReference type="GO" id="GO:0008422">
    <property type="term" value="F:beta-glucosidase activity"/>
    <property type="evidence" value="ECO:0000318"/>
    <property type="project" value="GO_Central"/>
</dbReference>
<dbReference type="GO" id="GO:0016052">
    <property type="term" value="P:carbohydrate catabolic process"/>
    <property type="evidence" value="ECO:0000318"/>
    <property type="project" value="GO_Central"/>
</dbReference>
<dbReference type="FunFam" id="3.20.20.80:FF:000004">
    <property type="entry name" value="Beta-glucosidase 6-phospho-beta-glucosidase"/>
    <property type="match status" value="1"/>
</dbReference>
<dbReference type="Gene3D" id="3.20.20.80">
    <property type="entry name" value="Glycosidases"/>
    <property type="match status" value="1"/>
</dbReference>
<dbReference type="InterPro" id="IPR001360">
    <property type="entry name" value="Glyco_hydro_1"/>
</dbReference>
<dbReference type="InterPro" id="IPR018120">
    <property type="entry name" value="Glyco_hydro_1_AS"/>
</dbReference>
<dbReference type="InterPro" id="IPR033132">
    <property type="entry name" value="Glyco_hydro_1_N_CS"/>
</dbReference>
<dbReference type="InterPro" id="IPR017853">
    <property type="entry name" value="Glycoside_hydrolase_SF"/>
</dbReference>
<dbReference type="NCBIfam" id="NF007154">
    <property type="entry name" value="PRK09589.1"/>
    <property type="match status" value="1"/>
</dbReference>
<dbReference type="NCBIfam" id="NF011589">
    <property type="entry name" value="PRK15014.1"/>
    <property type="match status" value="1"/>
</dbReference>
<dbReference type="PANTHER" id="PTHR10353:SF85">
    <property type="entry name" value="ARYL-PHOSPHO-BETA-D-GLUCOSIDASE BGLA"/>
    <property type="match status" value="1"/>
</dbReference>
<dbReference type="PANTHER" id="PTHR10353">
    <property type="entry name" value="GLYCOSYL HYDROLASE"/>
    <property type="match status" value="1"/>
</dbReference>
<dbReference type="Pfam" id="PF00232">
    <property type="entry name" value="Glyco_hydro_1"/>
    <property type="match status" value="1"/>
</dbReference>
<dbReference type="PRINTS" id="PR00131">
    <property type="entry name" value="GLHYDRLASE1"/>
</dbReference>
<dbReference type="SUPFAM" id="SSF51445">
    <property type="entry name" value="(Trans)glycosidases"/>
    <property type="match status" value="1"/>
</dbReference>
<dbReference type="PROSITE" id="PS00572">
    <property type="entry name" value="GLYCOSYL_HYDROL_F1_1"/>
    <property type="match status" value="1"/>
</dbReference>
<dbReference type="PROSITE" id="PS00653">
    <property type="entry name" value="GLYCOSYL_HYDROL_F1_2"/>
    <property type="match status" value="1"/>
</dbReference>
<protein>
    <recommendedName>
        <fullName>Aryl-phospho-beta-D-glucosidase BglA</fullName>
        <ecNumber>3.2.1.86</ecNumber>
    </recommendedName>
    <alternativeName>
        <fullName>6-phospho-beta-glucosidase</fullName>
    </alternativeName>
</protein>
<sequence>MGNMPKDFLWGGALAAHQFEGGWNQGGKGPSVVDVMTAGAHGVPRKITDTIEENEFYPNHEAIDFYHRYKEDIALFAEMGLKCLRTSIGWSRIFPKGDEAEPNEAGLQFYDDVFDELLKHGIEPVITLSHFEMPLHLAREYGGFRNRKVVDFFVNFAEACFTRYKDKVKYWMTFNEINNQMDVNNPLFLWTNSGVVVGENENAKEVMYQTAHHELVASALAVAKGKDINPEFQIGAMVSHVPIYPFSSNPEDVMLAEEEMRQRYFFPDVQVRGYYPSYALKEFEREGYNITFEDGDDEILRNGTVDYLGFSYYMSTTVKSDVKNDNTGDIVNGGLPNGVENPYITSSDWGWAIDPTGLRYTLNRFYDRYQIPLFIVENGFGAVDTLEEDGKVHDPERIQYLKSHIEALKKAVTYDGVDLIGYTPWGIIDIVSFTTGEMKKRYGMIYVDRDNEGNGSMKRYKKDSFEWYKNVIQTNGEEL</sequence>
<evidence type="ECO:0000255" key="1"/>
<evidence type="ECO:0000255" key="2">
    <source>
        <dbReference type="PROSITE-ProRule" id="PRU10055"/>
    </source>
</evidence>
<evidence type="ECO:0000269" key="3">
    <source>
    </source>
</evidence>
<evidence type="ECO:0000269" key="4">
    <source>
    </source>
</evidence>
<evidence type="ECO:0000305" key="5"/>